<accession>B4UKE9</accession>
<name>ATPE_ANASK</name>
<reference key="1">
    <citation type="submission" date="2008-08" db="EMBL/GenBank/DDBJ databases">
        <title>Complete sequence of Anaeromyxobacter sp. K.</title>
        <authorList>
            <consortium name="US DOE Joint Genome Institute"/>
            <person name="Lucas S."/>
            <person name="Copeland A."/>
            <person name="Lapidus A."/>
            <person name="Glavina del Rio T."/>
            <person name="Dalin E."/>
            <person name="Tice H."/>
            <person name="Bruce D."/>
            <person name="Goodwin L."/>
            <person name="Pitluck S."/>
            <person name="Saunders E."/>
            <person name="Brettin T."/>
            <person name="Detter J.C."/>
            <person name="Han C."/>
            <person name="Larimer F."/>
            <person name="Land M."/>
            <person name="Hauser L."/>
            <person name="Kyrpides N."/>
            <person name="Ovchinnikiva G."/>
            <person name="Beliaev A."/>
        </authorList>
    </citation>
    <scope>NUCLEOTIDE SEQUENCE [LARGE SCALE GENOMIC DNA]</scope>
    <source>
        <strain>K</strain>
    </source>
</reference>
<organism>
    <name type="scientific">Anaeromyxobacter sp. (strain K)</name>
    <dbReference type="NCBI Taxonomy" id="447217"/>
    <lineage>
        <taxon>Bacteria</taxon>
        <taxon>Pseudomonadati</taxon>
        <taxon>Myxococcota</taxon>
        <taxon>Myxococcia</taxon>
        <taxon>Myxococcales</taxon>
        <taxon>Cystobacterineae</taxon>
        <taxon>Anaeromyxobacteraceae</taxon>
        <taxon>Anaeromyxobacter</taxon>
    </lineage>
</organism>
<keyword id="KW-0066">ATP synthesis</keyword>
<keyword id="KW-0997">Cell inner membrane</keyword>
<keyword id="KW-1003">Cell membrane</keyword>
<keyword id="KW-0139">CF(1)</keyword>
<keyword id="KW-0375">Hydrogen ion transport</keyword>
<keyword id="KW-0406">Ion transport</keyword>
<keyword id="KW-0472">Membrane</keyword>
<keyword id="KW-0813">Transport</keyword>
<proteinExistence type="inferred from homology"/>
<feature type="chain" id="PRO_1000127821" description="ATP synthase epsilon chain">
    <location>
        <begin position="1"/>
        <end position="132"/>
    </location>
</feature>
<sequence length="132" mass="14402">MALTLDIVTPEKRVLSVQVDEVRAPGVQGGFGVRLNHEPFMTALEPGRLTYVEGGREHHYAVGGGFLQVADNRVIVLADTAEAAGEIDVDRARKAFEDAQNRLLQLTEQDESHQAESARVRRAAARLTVAGR</sequence>
<protein>
    <recommendedName>
        <fullName evidence="1">ATP synthase epsilon chain</fullName>
    </recommendedName>
    <alternativeName>
        <fullName evidence="1">ATP synthase F1 sector epsilon subunit</fullName>
    </alternativeName>
    <alternativeName>
        <fullName evidence="1">F-ATPase epsilon subunit</fullName>
    </alternativeName>
</protein>
<dbReference type="EMBL" id="CP001131">
    <property type="protein sequence ID" value="ACG75685.1"/>
    <property type="molecule type" value="Genomic_DNA"/>
</dbReference>
<dbReference type="RefSeq" id="WP_012528428.1">
    <property type="nucleotide sequence ID" value="NC_011145.1"/>
</dbReference>
<dbReference type="SMR" id="B4UKE9"/>
<dbReference type="KEGG" id="ank:AnaeK_4483"/>
<dbReference type="HOGENOM" id="CLU_084338_2_1_7"/>
<dbReference type="OrthoDB" id="9799969at2"/>
<dbReference type="Proteomes" id="UP000001871">
    <property type="component" value="Chromosome"/>
</dbReference>
<dbReference type="GO" id="GO:0005886">
    <property type="term" value="C:plasma membrane"/>
    <property type="evidence" value="ECO:0007669"/>
    <property type="project" value="UniProtKB-SubCell"/>
</dbReference>
<dbReference type="GO" id="GO:0045259">
    <property type="term" value="C:proton-transporting ATP synthase complex"/>
    <property type="evidence" value="ECO:0007669"/>
    <property type="project" value="UniProtKB-KW"/>
</dbReference>
<dbReference type="GO" id="GO:0005524">
    <property type="term" value="F:ATP binding"/>
    <property type="evidence" value="ECO:0007669"/>
    <property type="project" value="UniProtKB-UniRule"/>
</dbReference>
<dbReference type="GO" id="GO:0046933">
    <property type="term" value="F:proton-transporting ATP synthase activity, rotational mechanism"/>
    <property type="evidence" value="ECO:0007669"/>
    <property type="project" value="UniProtKB-UniRule"/>
</dbReference>
<dbReference type="CDD" id="cd12152">
    <property type="entry name" value="F1-ATPase_delta"/>
    <property type="match status" value="1"/>
</dbReference>
<dbReference type="Gene3D" id="2.60.15.10">
    <property type="entry name" value="F0F1 ATP synthase delta/epsilon subunit, N-terminal"/>
    <property type="match status" value="1"/>
</dbReference>
<dbReference type="HAMAP" id="MF_00530">
    <property type="entry name" value="ATP_synth_epsil_bac"/>
    <property type="match status" value="1"/>
</dbReference>
<dbReference type="InterPro" id="IPR001469">
    <property type="entry name" value="ATP_synth_F1_dsu/esu"/>
</dbReference>
<dbReference type="InterPro" id="IPR020546">
    <property type="entry name" value="ATP_synth_F1_dsu/esu_N"/>
</dbReference>
<dbReference type="InterPro" id="IPR020547">
    <property type="entry name" value="ATP_synth_F1_esu_C"/>
</dbReference>
<dbReference type="InterPro" id="IPR036771">
    <property type="entry name" value="ATPsynth_dsu/esu_N"/>
</dbReference>
<dbReference type="NCBIfam" id="TIGR01216">
    <property type="entry name" value="ATP_synt_epsi"/>
    <property type="match status" value="1"/>
</dbReference>
<dbReference type="NCBIfam" id="NF009980">
    <property type="entry name" value="PRK13446.1"/>
    <property type="match status" value="1"/>
</dbReference>
<dbReference type="PANTHER" id="PTHR13822">
    <property type="entry name" value="ATP SYNTHASE DELTA/EPSILON CHAIN"/>
    <property type="match status" value="1"/>
</dbReference>
<dbReference type="PANTHER" id="PTHR13822:SF10">
    <property type="entry name" value="ATP SYNTHASE EPSILON CHAIN, CHLOROPLASTIC"/>
    <property type="match status" value="1"/>
</dbReference>
<dbReference type="Pfam" id="PF00401">
    <property type="entry name" value="ATP-synt_DE"/>
    <property type="match status" value="1"/>
</dbReference>
<dbReference type="Pfam" id="PF02823">
    <property type="entry name" value="ATP-synt_DE_N"/>
    <property type="match status" value="1"/>
</dbReference>
<dbReference type="SUPFAM" id="SSF51344">
    <property type="entry name" value="Epsilon subunit of F1F0-ATP synthase N-terminal domain"/>
    <property type="match status" value="1"/>
</dbReference>
<comment type="function">
    <text evidence="1">Produces ATP from ADP in the presence of a proton gradient across the membrane.</text>
</comment>
<comment type="subunit">
    <text evidence="1">F-type ATPases have 2 components, CF(1) - the catalytic core - and CF(0) - the membrane proton channel. CF(1) has five subunits: alpha(3), beta(3), gamma(1), delta(1), epsilon(1). CF(0) has three main subunits: a, b and c.</text>
</comment>
<comment type="subcellular location">
    <subcellularLocation>
        <location evidence="1">Cell inner membrane</location>
        <topology evidence="1">Peripheral membrane protein</topology>
    </subcellularLocation>
</comment>
<comment type="similarity">
    <text evidence="1">Belongs to the ATPase epsilon chain family.</text>
</comment>
<evidence type="ECO:0000255" key="1">
    <source>
        <dbReference type="HAMAP-Rule" id="MF_00530"/>
    </source>
</evidence>
<gene>
    <name evidence="1" type="primary">atpC</name>
    <name type="ordered locus">AnaeK_4483</name>
</gene>